<dbReference type="EC" id="2.7.4.25" evidence="1"/>
<dbReference type="EMBL" id="CP000056">
    <property type="protein sequence ID" value="AAX71711.1"/>
    <property type="molecule type" value="Genomic_DNA"/>
</dbReference>
<dbReference type="RefSeq" id="WP_009880409.1">
    <property type="nucleotide sequence ID" value="NC_007296.2"/>
</dbReference>
<dbReference type="SMR" id="Q48U95"/>
<dbReference type="KEGG" id="spb:M28_Spy0597"/>
<dbReference type="HOGENOM" id="CLU_079959_0_2_9"/>
<dbReference type="GO" id="GO:0005829">
    <property type="term" value="C:cytosol"/>
    <property type="evidence" value="ECO:0007669"/>
    <property type="project" value="TreeGrafter"/>
</dbReference>
<dbReference type="GO" id="GO:0005524">
    <property type="term" value="F:ATP binding"/>
    <property type="evidence" value="ECO:0007669"/>
    <property type="project" value="UniProtKB-UniRule"/>
</dbReference>
<dbReference type="GO" id="GO:0036430">
    <property type="term" value="F:CMP kinase activity"/>
    <property type="evidence" value="ECO:0007669"/>
    <property type="project" value="RHEA"/>
</dbReference>
<dbReference type="GO" id="GO:0036431">
    <property type="term" value="F:dCMP kinase activity"/>
    <property type="evidence" value="ECO:0007669"/>
    <property type="project" value="RHEA"/>
</dbReference>
<dbReference type="GO" id="GO:0015949">
    <property type="term" value="P:nucleobase-containing small molecule interconversion"/>
    <property type="evidence" value="ECO:0007669"/>
    <property type="project" value="TreeGrafter"/>
</dbReference>
<dbReference type="GO" id="GO:0006220">
    <property type="term" value="P:pyrimidine nucleotide metabolic process"/>
    <property type="evidence" value="ECO:0007669"/>
    <property type="project" value="UniProtKB-UniRule"/>
</dbReference>
<dbReference type="CDD" id="cd02020">
    <property type="entry name" value="CMPK"/>
    <property type="match status" value="1"/>
</dbReference>
<dbReference type="FunFam" id="3.40.50.300:FF:000484">
    <property type="entry name" value="Cytidylate kinase"/>
    <property type="match status" value="1"/>
</dbReference>
<dbReference type="Gene3D" id="3.40.50.300">
    <property type="entry name" value="P-loop containing nucleotide triphosphate hydrolases"/>
    <property type="match status" value="1"/>
</dbReference>
<dbReference type="HAMAP" id="MF_00238">
    <property type="entry name" value="Cytidyl_kinase_type1"/>
    <property type="match status" value="1"/>
</dbReference>
<dbReference type="InterPro" id="IPR003136">
    <property type="entry name" value="Cytidylate_kin"/>
</dbReference>
<dbReference type="InterPro" id="IPR011994">
    <property type="entry name" value="Cytidylate_kinase_dom"/>
</dbReference>
<dbReference type="InterPro" id="IPR027417">
    <property type="entry name" value="P-loop_NTPase"/>
</dbReference>
<dbReference type="NCBIfam" id="TIGR00017">
    <property type="entry name" value="cmk"/>
    <property type="match status" value="1"/>
</dbReference>
<dbReference type="PANTHER" id="PTHR21299:SF2">
    <property type="entry name" value="CYTIDYLATE KINASE"/>
    <property type="match status" value="1"/>
</dbReference>
<dbReference type="PANTHER" id="PTHR21299">
    <property type="entry name" value="CYTIDYLATE KINASE/PANTOATE-BETA-ALANINE LIGASE"/>
    <property type="match status" value="1"/>
</dbReference>
<dbReference type="Pfam" id="PF02224">
    <property type="entry name" value="Cytidylate_kin"/>
    <property type="match status" value="1"/>
</dbReference>
<dbReference type="SUPFAM" id="SSF52540">
    <property type="entry name" value="P-loop containing nucleoside triphosphate hydrolases"/>
    <property type="match status" value="1"/>
</dbReference>
<feature type="chain" id="PRO_1000048300" description="Cytidylate kinase">
    <location>
        <begin position="1"/>
        <end position="226"/>
    </location>
</feature>
<feature type="binding site" evidence="1">
    <location>
        <begin position="10"/>
        <end position="18"/>
    </location>
    <ligand>
        <name>ATP</name>
        <dbReference type="ChEBI" id="CHEBI:30616"/>
    </ligand>
</feature>
<organism>
    <name type="scientific">Streptococcus pyogenes serotype M28 (strain MGAS6180)</name>
    <dbReference type="NCBI Taxonomy" id="319701"/>
    <lineage>
        <taxon>Bacteria</taxon>
        <taxon>Bacillati</taxon>
        <taxon>Bacillota</taxon>
        <taxon>Bacilli</taxon>
        <taxon>Lactobacillales</taxon>
        <taxon>Streptococcaceae</taxon>
        <taxon>Streptococcus</taxon>
    </lineage>
</organism>
<evidence type="ECO:0000255" key="1">
    <source>
        <dbReference type="HAMAP-Rule" id="MF_00238"/>
    </source>
</evidence>
<protein>
    <recommendedName>
        <fullName evidence="1">Cytidylate kinase</fullName>
        <shortName evidence="1">CK</shortName>
        <ecNumber evidence="1">2.7.4.25</ecNumber>
    </recommendedName>
    <alternativeName>
        <fullName evidence="1">Cytidine monophosphate kinase</fullName>
        <shortName evidence="1">CMP kinase</shortName>
    </alternativeName>
</protein>
<proteinExistence type="inferred from homology"/>
<keyword id="KW-0067">ATP-binding</keyword>
<keyword id="KW-0963">Cytoplasm</keyword>
<keyword id="KW-0418">Kinase</keyword>
<keyword id="KW-0547">Nucleotide-binding</keyword>
<keyword id="KW-0808">Transferase</keyword>
<accession>Q48U95</accession>
<name>KCY_STRPM</name>
<comment type="catalytic activity">
    <reaction evidence="1">
        <text>CMP + ATP = CDP + ADP</text>
        <dbReference type="Rhea" id="RHEA:11600"/>
        <dbReference type="ChEBI" id="CHEBI:30616"/>
        <dbReference type="ChEBI" id="CHEBI:58069"/>
        <dbReference type="ChEBI" id="CHEBI:60377"/>
        <dbReference type="ChEBI" id="CHEBI:456216"/>
        <dbReference type="EC" id="2.7.4.25"/>
    </reaction>
</comment>
<comment type="catalytic activity">
    <reaction evidence="1">
        <text>dCMP + ATP = dCDP + ADP</text>
        <dbReference type="Rhea" id="RHEA:25094"/>
        <dbReference type="ChEBI" id="CHEBI:30616"/>
        <dbReference type="ChEBI" id="CHEBI:57566"/>
        <dbReference type="ChEBI" id="CHEBI:58593"/>
        <dbReference type="ChEBI" id="CHEBI:456216"/>
        <dbReference type="EC" id="2.7.4.25"/>
    </reaction>
</comment>
<comment type="subcellular location">
    <subcellularLocation>
        <location evidence="1">Cytoplasm</location>
    </subcellularLocation>
</comment>
<comment type="similarity">
    <text evidence="1">Belongs to the cytidylate kinase family. Type 1 subfamily.</text>
</comment>
<reference key="1">
    <citation type="journal article" date="2005" name="J. Infect. Dis.">
        <title>Genome sequence of a serotype M28 strain of group A Streptococcus: potential new insights into puerperal sepsis and bacterial disease specificity.</title>
        <authorList>
            <person name="Green N.M."/>
            <person name="Zhang S."/>
            <person name="Porcella S.F."/>
            <person name="Nagiec M.J."/>
            <person name="Barbian K.D."/>
            <person name="Beres S.B."/>
            <person name="Lefebvre R.B."/>
            <person name="Musser J.M."/>
        </authorList>
    </citation>
    <scope>NUCLEOTIDE SEQUENCE [LARGE SCALE GENOMIC DNA]</scope>
    <source>
        <strain>MGAS6180</strain>
    </source>
</reference>
<gene>
    <name evidence="1" type="primary">cmk</name>
    <name type="ordered locus">M28_Spy0597</name>
</gene>
<sequence>MKAIKIAIDGPASSGKSTVAKIIAKNLGYTYLDTGAMYRSATYIALTHGYTGKEVALILEELEKNPISFKKAKDGSQLVFLGDEDVTLAIRQNDVTNNVSWVSALPEIREELVHQQRRIAQAGGIIMDGRDIGTVVLPDAELKIFLVASVEERAERRYKENLEKGIESDFETLKEEIAARDYKDSHRKVSPLKAAEDALIFDTTGVSIDGVVQFIQEKAEKIVDMS</sequence>